<reference key="1">
    <citation type="submission" date="2009-03" db="EMBL/GenBank/DDBJ databases">
        <title>Complete genome sequence of Edwardsiella ictaluri 93-146.</title>
        <authorList>
            <person name="Williams M.L."/>
            <person name="Gillaspy A.F."/>
            <person name="Dyer D.W."/>
            <person name="Thune R.L."/>
            <person name="Waldbieser G.C."/>
            <person name="Schuster S.C."/>
            <person name="Gipson J."/>
            <person name="Zaitshik J."/>
            <person name="Landry C."/>
            <person name="Lawrence M.L."/>
        </authorList>
    </citation>
    <scope>NUCLEOTIDE SEQUENCE [LARGE SCALE GENOMIC DNA]</scope>
    <source>
        <strain>93-146</strain>
    </source>
</reference>
<organism>
    <name type="scientific">Edwardsiella ictaluri (strain 93-146)</name>
    <dbReference type="NCBI Taxonomy" id="634503"/>
    <lineage>
        <taxon>Bacteria</taxon>
        <taxon>Pseudomonadati</taxon>
        <taxon>Pseudomonadota</taxon>
        <taxon>Gammaproteobacteria</taxon>
        <taxon>Enterobacterales</taxon>
        <taxon>Hafniaceae</taxon>
        <taxon>Edwardsiella</taxon>
    </lineage>
</organism>
<name>Y662_EDWI9</name>
<evidence type="ECO:0000255" key="1">
    <source>
        <dbReference type="HAMAP-Rule" id="MF_00652"/>
    </source>
</evidence>
<accession>C5B7K7</accession>
<gene>
    <name type="ordered locus">NT01EI_0662</name>
</gene>
<comment type="similarity">
    <text evidence="1">Belongs to the UPF0246 family.</text>
</comment>
<feature type="chain" id="PRO_1000212425" description="UPF0246 protein NT01EI_0662">
    <location>
        <begin position="1"/>
        <end position="265"/>
    </location>
</feature>
<sequence>MLMIISPAKTLDYTSPLAIQRYTQPQMLAQAETLMQTVRTLTPAQLGSLMKISDKLAGLNAARFTEWQPSFTPENARQAILAFKGDVYTGLQAETFSEQDFDFAQRHLCMLSGLYGVLRPLDLMMPYRLEMGTRLHTPYGNDLYAFWGDSITRQINQQLLQQGDRVVVNLASDEYFKAVRPAALEGELIKPIFMDEKNGSMKVISFYAKKARGMMSRFIIQARLREPEQLKAFDLEGYAFAGETQGRQGRELLFTRRHSAISPAR</sequence>
<protein>
    <recommendedName>
        <fullName evidence="1">UPF0246 protein NT01EI_0662</fullName>
    </recommendedName>
</protein>
<dbReference type="EMBL" id="CP001600">
    <property type="protein sequence ID" value="ACR67884.1"/>
    <property type="molecule type" value="Genomic_DNA"/>
</dbReference>
<dbReference type="SMR" id="C5B7K7"/>
<dbReference type="STRING" id="67780.B6E78_13980"/>
<dbReference type="KEGG" id="eic:NT01EI_0662"/>
<dbReference type="PATRIC" id="fig|634503.3.peg.596"/>
<dbReference type="HOGENOM" id="CLU_061989_0_0_6"/>
<dbReference type="OrthoDB" id="9777133at2"/>
<dbReference type="Proteomes" id="UP000001485">
    <property type="component" value="Chromosome"/>
</dbReference>
<dbReference type="GO" id="GO:0005829">
    <property type="term" value="C:cytosol"/>
    <property type="evidence" value="ECO:0007669"/>
    <property type="project" value="TreeGrafter"/>
</dbReference>
<dbReference type="GO" id="GO:0033194">
    <property type="term" value="P:response to hydroperoxide"/>
    <property type="evidence" value="ECO:0007669"/>
    <property type="project" value="TreeGrafter"/>
</dbReference>
<dbReference type="HAMAP" id="MF_00652">
    <property type="entry name" value="UPF0246"/>
    <property type="match status" value="1"/>
</dbReference>
<dbReference type="InterPro" id="IPR005583">
    <property type="entry name" value="YaaA"/>
</dbReference>
<dbReference type="NCBIfam" id="NF002541">
    <property type="entry name" value="PRK02101.1-1"/>
    <property type="match status" value="1"/>
</dbReference>
<dbReference type="NCBIfam" id="NF002542">
    <property type="entry name" value="PRK02101.1-3"/>
    <property type="match status" value="1"/>
</dbReference>
<dbReference type="PANTHER" id="PTHR30283:SF4">
    <property type="entry name" value="PEROXIDE STRESS RESISTANCE PROTEIN YAAA"/>
    <property type="match status" value="1"/>
</dbReference>
<dbReference type="PANTHER" id="PTHR30283">
    <property type="entry name" value="PEROXIDE STRESS RESPONSE PROTEIN YAAA"/>
    <property type="match status" value="1"/>
</dbReference>
<dbReference type="Pfam" id="PF03883">
    <property type="entry name" value="H2O2_YaaD"/>
    <property type="match status" value="1"/>
</dbReference>
<proteinExistence type="inferred from homology"/>